<name>NHAA_PSECL</name>
<proteinExistence type="evidence at protein level"/>
<dbReference type="EC" id="4.2.1.84"/>
<dbReference type="EMBL" id="D90216">
    <property type="protein sequence ID" value="BAA14245.1"/>
    <property type="molecule type" value="Genomic_DNA"/>
</dbReference>
<dbReference type="PIR" id="A42725">
    <property type="entry name" value="A42725"/>
</dbReference>
<dbReference type="SMR" id="P27764"/>
<dbReference type="BioCyc" id="MetaCyc:MONOMER-15567"/>
<dbReference type="GO" id="GO:0018822">
    <property type="term" value="F:nitrile hydratase activity"/>
    <property type="evidence" value="ECO:0007669"/>
    <property type="project" value="UniProtKB-EC"/>
</dbReference>
<dbReference type="GO" id="GO:0046914">
    <property type="term" value="F:transition metal ion binding"/>
    <property type="evidence" value="ECO:0007669"/>
    <property type="project" value="InterPro"/>
</dbReference>
<dbReference type="Gene3D" id="3.90.330.10">
    <property type="entry name" value="Nitrile hydratase alpha /Thiocyanate hydrolase gamma"/>
    <property type="match status" value="1"/>
</dbReference>
<dbReference type="InterPro" id="IPR036648">
    <property type="entry name" value="CN_Hdrase_a/SCN_Hdrase_g_sf"/>
</dbReference>
<dbReference type="InterPro" id="IPR004232">
    <property type="entry name" value="CN_Hdrtase_a/SCN_Hdrlase_g"/>
</dbReference>
<dbReference type="InterPro" id="IPR023900">
    <property type="entry name" value="CN_Hdrtase_asu/SCN_Hdrlase_gsu"/>
</dbReference>
<dbReference type="InterPro" id="IPR018141">
    <property type="entry name" value="Nitrile_hydratase_asu"/>
</dbReference>
<dbReference type="NCBIfam" id="TIGR01323">
    <property type="entry name" value="nitrile_alph"/>
    <property type="match status" value="1"/>
</dbReference>
<dbReference type="Pfam" id="PF02979">
    <property type="entry name" value="NHase_alpha"/>
    <property type="match status" value="1"/>
</dbReference>
<dbReference type="PIRSF" id="PIRSF001426">
    <property type="entry name" value="NHase_alpha"/>
    <property type="match status" value="1"/>
</dbReference>
<dbReference type="SUPFAM" id="SSF56209">
    <property type="entry name" value="Nitrile hydratase alpha chain"/>
    <property type="match status" value="1"/>
</dbReference>
<reference key="1">
    <citation type="journal article" date="1991" name="J. Bacteriol.">
        <title>Cloning and characterization of genes responsible for metabolism of nitrile compounds from Pseudomonas chlororaphis B23.</title>
        <authorList>
            <person name="Nishiyama M."/>
            <person name="Horinouchi S."/>
            <person name="Kobayashi M."/>
            <person name="Nagasawa T."/>
            <person name="Yamada H."/>
            <person name="Beppu T."/>
        </authorList>
    </citation>
    <scope>NUCLEOTIDE SEQUENCE [GENOMIC DNA]</scope>
    <scope>PROTEIN SEQUENCE OF 2-26 AND 164-178</scope>
    <source>
        <strain>B23</strain>
    </source>
</reference>
<gene>
    <name type="primary">nthA</name>
</gene>
<organism>
    <name type="scientific">Pseudomonas chlororaphis</name>
    <name type="common">Pseudomonas aureofaciens</name>
    <dbReference type="NCBI Taxonomy" id="333"/>
    <lineage>
        <taxon>Bacteria</taxon>
        <taxon>Pseudomonadati</taxon>
        <taxon>Pseudomonadota</taxon>
        <taxon>Gammaproteobacteria</taxon>
        <taxon>Pseudomonadales</taxon>
        <taxon>Pseudomonadaceae</taxon>
        <taxon>Pseudomonas</taxon>
    </lineage>
</organism>
<sequence length="200" mass="22117">MSTSISTTATPSTPGERAWALFQVLKSKELIPEGYVEQLTQLMAHDWSPENGARVVAKAWVDPQFRALLLKDGTAACAQFGYTGPQGEYIVALEDTPGVKNVIVCSLCSCTNWPVLGLPPEWYKGFEFRARLVREGRTVLRELGTELPSDTVIKVWDTSAESRYLVLPQRPEGSEHMSEEQLQQLVTKDVLIGVALPRVG</sequence>
<accession>P27764</accession>
<comment type="function">
    <text>NHase catalyzes the hydration of various nitrile compounds to the corresponding amides. Industrial production of acrylamide is now being developed using some of the enzymes of this class.</text>
</comment>
<comment type="catalytic activity">
    <reaction>
        <text>an aliphatic primary amide = an aliphatic nitrile + H2O</text>
        <dbReference type="Rhea" id="RHEA:12673"/>
        <dbReference type="ChEBI" id="CHEBI:15377"/>
        <dbReference type="ChEBI" id="CHEBI:65285"/>
        <dbReference type="ChEBI" id="CHEBI:80291"/>
        <dbReference type="EC" id="4.2.1.84"/>
    </reaction>
</comment>
<comment type="cofactor">
    <cofactor>
        <name>Fe(3+)</name>
        <dbReference type="ChEBI" id="CHEBI:29034"/>
    </cofactor>
    <text>Binds 1 Fe(3+) ion per subunit.</text>
</comment>
<comment type="activity regulation">
    <text>Inactivated by oxidation of Cys-110 to a sulfenic acid.</text>
</comment>
<comment type="subunit">
    <text>Heterodimer of an alpha and a beta chain.</text>
</comment>
<comment type="PTM">
    <text evidence="1">Oxidation on Cys-108 is essential for the activity.</text>
</comment>
<comment type="PTM">
    <text>Oxidation on Cys-110 stabilizes the Fe-NO ligand coordinated in the inactive form.</text>
</comment>
<comment type="similarity">
    <text evidence="3">Belongs to the nitrile hydratase subunit alpha family.</text>
</comment>
<protein>
    <recommendedName>
        <fullName>Nitrile hydratase subunit alpha</fullName>
        <shortName>NHase</shortName>
        <shortName>Nitrilase</shortName>
        <ecNumber>4.2.1.84</ecNumber>
    </recommendedName>
</protein>
<feature type="initiator methionine" description="Removed" evidence="2">
    <location>
        <position position="1"/>
    </location>
</feature>
<feature type="chain" id="PRO_0000186820" description="Nitrile hydratase subunit alpha">
    <location>
        <begin position="2"/>
        <end position="200"/>
    </location>
</feature>
<feature type="binding site" evidence="1">
    <location>
        <position position="105"/>
    </location>
    <ligand>
        <name>Fe(3+)</name>
        <dbReference type="ChEBI" id="CHEBI:29034"/>
    </ligand>
</feature>
<feature type="binding site" evidence="1">
    <location>
        <position position="108"/>
    </location>
    <ligand>
        <name>Fe(3+)</name>
        <dbReference type="ChEBI" id="CHEBI:29034"/>
    </ligand>
</feature>
<feature type="binding site" evidence="1">
    <location>
        <position position="109"/>
    </location>
    <ligand>
        <name>Fe(3+)</name>
        <dbReference type="ChEBI" id="CHEBI:29034"/>
    </ligand>
</feature>
<feature type="binding site" evidence="1">
    <location>
        <position position="110"/>
    </location>
    <ligand>
        <name>Fe(3+)</name>
        <dbReference type="ChEBI" id="CHEBI:29034"/>
    </ligand>
</feature>
<feature type="modified residue" description="Cysteine sulfinic acid (-SO2H)" evidence="1">
    <location>
        <position position="108"/>
    </location>
</feature>
<feature type="modified residue" description="Cysteine sulfenic acid (-SOH)" evidence="1">
    <location>
        <position position="110"/>
    </location>
</feature>
<evidence type="ECO:0000250" key="1"/>
<evidence type="ECO:0000269" key="2">
    <source>
    </source>
</evidence>
<evidence type="ECO:0000305" key="3"/>
<keyword id="KW-0903">Direct protein sequencing</keyword>
<keyword id="KW-0408">Iron</keyword>
<keyword id="KW-0456">Lyase</keyword>
<keyword id="KW-0479">Metal-binding</keyword>
<keyword id="KW-0558">Oxidation</keyword>